<organism>
    <name type="scientific">Escherichia coli O157:H7</name>
    <dbReference type="NCBI Taxonomy" id="83334"/>
    <lineage>
        <taxon>Bacteria</taxon>
        <taxon>Pseudomonadati</taxon>
        <taxon>Pseudomonadota</taxon>
        <taxon>Gammaproteobacteria</taxon>
        <taxon>Enterobacterales</taxon>
        <taxon>Enterobacteriaceae</taxon>
        <taxon>Escherichia</taxon>
    </lineage>
</organism>
<gene>
    <name type="primary">nrfC</name>
    <name type="ordered locus">Z5671</name>
    <name type="ordered locus">ECs5054</name>
</gene>
<protein>
    <recommendedName>
        <fullName>Protein NrfC</fullName>
    </recommendedName>
</protein>
<dbReference type="EMBL" id="AE005174">
    <property type="protein sequence ID" value="AAG59270.1"/>
    <property type="molecule type" value="Genomic_DNA"/>
</dbReference>
<dbReference type="EMBL" id="BA000007">
    <property type="protein sequence ID" value="BAB38477.1"/>
    <property type="molecule type" value="Genomic_DNA"/>
</dbReference>
<dbReference type="PIR" id="B86101">
    <property type="entry name" value="B86101"/>
</dbReference>
<dbReference type="PIR" id="F91260">
    <property type="entry name" value="F91260"/>
</dbReference>
<dbReference type="RefSeq" id="NP_313081.1">
    <property type="nucleotide sequence ID" value="NC_002695.1"/>
</dbReference>
<dbReference type="RefSeq" id="WP_000220281.1">
    <property type="nucleotide sequence ID" value="NZ_VOAI01000008.1"/>
</dbReference>
<dbReference type="SMR" id="P0AAK8"/>
<dbReference type="STRING" id="155864.Z5671"/>
<dbReference type="GeneID" id="914288"/>
<dbReference type="GeneID" id="93777757"/>
<dbReference type="KEGG" id="ece:Z5671"/>
<dbReference type="KEGG" id="ecs:ECs_5054"/>
<dbReference type="PATRIC" id="fig|386585.9.peg.5280"/>
<dbReference type="eggNOG" id="COG0437">
    <property type="taxonomic scope" value="Bacteria"/>
</dbReference>
<dbReference type="HOGENOM" id="CLU_043374_1_3_6"/>
<dbReference type="OMA" id="CVDRIYN"/>
<dbReference type="Proteomes" id="UP000000558">
    <property type="component" value="Chromosome"/>
</dbReference>
<dbReference type="Proteomes" id="UP000002519">
    <property type="component" value="Chromosome"/>
</dbReference>
<dbReference type="GO" id="GO:0051539">
    <property type="term" value="F:4 iron, 4 sulfur cluster binding"/>
    <property type="evidence" value="ECO:0007669"/>
    <property type="project" value="UniProtKB-KW"/>
</dbReference>
<dbReference type="GO" id="GO:0046872">
    <property type="term" value="F:metal ion binding"/>
    <property type="evidence" value="ECO:0007669"/>
    <property type="project" value="UniProtKB-KW"/>
</dbReference>
<dbReference type="GO" id="GO:0016491">
    <property type="term" value="F:oxidoreductase activity"/>
    <property type="evidence" value="ECO:0007669"/>
    <property type="project" value="UniProtKB-KW"/>
</dbReference>
<dbReference type="CDD" id="cd10551">
    <property type="entry name" value="PsrB"/>
    <property type="match status" value="1"/>
</dbReference>
<dbReference type="FunFam" id="3.30.70.20:FF:000014">
    <property type="entry name" value="Cytochrome c nitrite reductase, Fe-S protein"/>
    <property type="match status" value="1"/>
</dbReference>
<dbReference type="Gene3D" id="3.30.70.20">
    <property type="match status" value="2"/>
</dbReference>
<dbReference type="InterPro" id="IPR017896">
    <property type="entry name" value="4Fe4S_Fe-S-bd"/>
</dbReference>
<dbReference type="InterPro" id="IPR017900">
    <property type="entry name" value="4Fe4S_Fe_S_CS"/>
</dbReference>
<dbReference type="InterPro" id="IPR017567">
    <property type="entry name" value="Cyt_c_NO2Rdtase_NrfC"/>
</dbReference>
<dbReference type="InterPro" id="IPR050954">
    <property type="entry name" value="ET_IronSulfur_Cluster-Binding"/>
</dbReference>
<dbReference type="InterPro" id="IPR006311">
    <property type="entry name" value="TAT_signal"/>
</dbReference>
<dbReference type="InterPro" id="IPR019546">
    <property type="entry name" value="TAT_signal_bac_arc"/>
</dbReference>
<dbReference type="NCBIfam" id="TIGR03149">
    <property type="entry name" value="cyt_nit_nrfC"/>
    <property type="match status" value="1"/>
</dbReference>
<dbReference type="NCBIfam" id="TIGR01409">
    <property type="entry name" value="TAT_signal_seq"/>
    <property type="match status" value="1"/>
</dbReference>
<dbReference type="PANTHER" id="PTHR43177">
    <property type="entry name" value="PROTEIN NRFC"/>
    <property type="match status" value="1"/>
</dbReference>
<dbReference type="PANTHER" id="PTHR43177:SF9">
    <property type="entry name" value="PROTEIN NRFC"/>
    <property type="match status" value="1"/>
</dbReference>
<dbReference type="Pfam" id="PF00037">
    <property type="entry name" value="Fer4"/>
    <property type="match status" value="1"/>
</dbReference>
<dbReference type="Pfam" id="PF13247">
    <property type="entry name" value="Fer4_11"/>
    <property type="match status" value="1"/>
</dbReference>
<dbReference type="SUPFAM" id="SSF54862">
    <property type="entry name" value="4Fe-4S ferredoxins"/>
    <property type="match status" value="1"/>
</dbReference>
<dbReference type="PROSITE" id="PS00198">
    <property type="entry name" value="4FE4S_FER_1"/>
    <property type="match status" value="1"/>
</dbReference>
<dbReference type="PROSITE" id="PS51379">
    <property type="entry name" value="4FE4S_FER_2"/>
    <property type="match status" value="3"/>
</dbReference>
<dbReference type="PROSITE" id="PS51318">
    <property type="entry name" value="TAT"/>
    <property type="match status" value="1"/>
</dbReference>
<reference key="1">
    <citation type="journal article" date="2001" name="Nature">
        <title>Genome sequence of enterohaemorrhagic Escherichia coli O157:H7.</title>
        <authorList>
            <person name="Perna N.T."/>
            <person name="Plunkett G. III"/>
            <person name="Burland V."/>
            <person name="Mau B."/>
            <person name="Glasner J.D."/>
            <person name="Rose D.J."/>
            <person name="Mayhew G.F."/>
            <person name="Evans P.S."/>
            <person name="Gregor J."/>
            <person name="Kirkpatrick H.A."/>
            <person name="Posfai G."/>
            <person name="Hackett J."/>
            <person name="Klink S."/>
            <person name="Boutin A."/>
            <person name="Shao Y."/>
            <person name="Miller L."/>
            <person name="Grotbeck E.J."/>
            <person name="Davis N.W."/>
            <person name="Lim A."/>
            <person name="Dimalanta E.T."/>
            <person name="Potamousis K."/>
            <person name="Apodaca J."/>
            <person name="Anantharaman T.S."/>
            <person name="Lin J."/>
            <person name="Yen G."/>
            <person name="Schwartz D.C."/>
            <person name="Welch R.A."/>
            <person name="Blattner F.R."/>
        </authorList>
    </citation>
    <scope>NUCLEOTIDE SEQUENCE [LARGE SCALE GENOMIC DNA]</scope>
    <source>
        <strain>O157:H7 / EDL933 / ATCC 700927 / EHEC</strain>
    </source>
</reference>
<reference key="2">
    <citation type="journal article" date="2001" name="DNA Res.">
        <title>Complete genome sequence of enterohemorrhagic Escherichia coli O157:H7 and genomic comparison with a laboratory strain K-12.</title>
        <authorList>
            <person name="Hayashi T."/>
            <person name="Makino K."/>
            <person name="Ohnishi M."/>
            <person name="Kurokawa K."/>
            <person name="Ishii K."/>
            <person name="Yokoyama K."/>
            <person name="Han C.-G."/>
            <person name="Ohtsubo E."/>
            <person name="Nakayama K."/>
            <person name="Murata T."/>
            <person name="Tanaka M."/>
            <person name="Tobe T."/>
            <person name="Iida T."/>
            <person name="Takami H."/>
            <person name="Honda T."/>
            <person name="Sasakawa C."/>
            <person name="Ogasawara N."/>
            <person name="Yasunaga T."/>
            <person name="Kuhara S."/>
            <person name="Shiba T."/>
            <person name="Hattori M."/>
            <person name="Shinagawa H."/>
        </authorList>
    </citation>
    <scope>NUCLEOTIDE SEQUENCE [LARGE SCALE GENOMIC DNA]</scope>
    <source>
        <strain>O157:H7 / Sakai / RIMD 0509952 / EHEC</strain>
    </source>
</reference>
<sequence length="223" mass="24567">MTWSRRQFLTGVGVLAAVSGTAGRVVAKTLNINGVRYGMVHDESLCIGCTACMDACREVNKVPEGVSRLTIIRSEPQGEFPDVKYRFFRKSCQHCDHAPCVDVCPTGASFRDAASGIVDVNPDLCVGCQYCIAACPYRVRFIHPVTKTADKCDFCRKTNLQAGKLPACVEACPTKALTFGNLDDPNSEISQLLRQKPTYRYKLALGTKPKLYRVPFKYGEVSQ</sequence>
<evidence type="ECO:0000250" key="1"/>
<evidence type="ECO:0000255" key="2">
    <source>
        <dbReference type="PROSITE-ProRule" id="PRU00648"/>
    </source>
</evidence>
<evidence type="ECO:0000255" key="3">
    <source>
        <dbReference type="PROSITE-ProRule" id="PRU00711"/>
    </source>
</evidence>
<feature type="signal peptide" description="Tat-type signal" evidence="2">
    <location>
        <begin position="1"/>
        <end position="27"/>
    </location>
</feature>
<feature type="chain" id="PRO_0000042277" description="Protein NrfC">
    <location>
        <begin position="28"/>
        <end position="223"/>
    </location>
</feature>
<feature type="domain" description="4Fe-4S ferredoxin-type 1" evidence="3">
    <location>
        <begin position="37"/>
        <end position="65"/>
    </location>
</feature>
<feature type="domain" description="4Fe-4S ferredoxin-type 2" evidence="3">
    <location>
        <begin position="83"/>
        <end position="114"/>
    </location>
</feature>
<feature type="domain" description="4Fe-4S ferredoxin-type 3" evidence="3">
    <location>
        <begin position="116"/>
        <end position="145"/>
    </location>
</feature>
<feature type="binding site" evidence="1">
    <location>
        <position position="46"/>
    </location>
    <ligand>
        <name>[4Fe-4S] cluster</name>
        <dbReference type="ChEBI" id="CHEBI:49883"/>
        <label>1</label>
    </ligand>
</feature>
<feature type="binding site" evidence="1">
    <location>
        <position position="49"/>
    </location>
    <ligand>
        <name>[4Fe-4S] cluster</name>
        <dbReference type="ChEBI" id="CHEBI:49883"/>
        <label>1</label>
    </ligand>
</feature>
<feature type="binding site" evidence="1">
    <location>
        <position position="52"/>
    </location>
    <ligand>
        <name>[4Fe-4S] cluster</name>
        <dbReference type="ChEBI" id="CHEBI:49883"/>
        <label>1</label>
    </ligand>
</feature>
<feature type="binding site" evidence="1">
    <location>
        <position position="56"/>
    </location>
    <ligand>
        <name>[4Fe-4S] cluster</name>
        <dbReference type="ChEBI" id="CHEBI:49883"/>
        <label>2</label>
    </ligand>
</feature>
<feature type="binding site" evidence="1">
    <location>
        <position position="92"/>
    </location>
    <ligand>
        <name>[4Fe-4S] cluster</name>
        <dbReference type="ChEBI" id="CHEBI:49883"/>
        <label>3</label>
    </ligand>
</feature>
<feature type="binding site" evidence="1">
    <location>
        <position position="95"/>
    </location>
    <ligand>
        <name>[4Fe-4S] cluster</name>
        <dbReference type="ChEBI" id="CHEBI:49883"/>
        <label>3</label>
    </ligand>
</feature>
<feature type="binding site" evidence="1">
    <location>
        <position position="100"/>
    </location>
    <ligand>
        <name>[4Fe-4S] cluster</name>
        <dbReference type="ChEBI" id="CHEBI:49883"/>
        <label>3</label>
    </ligand>
</feature>
<feature type="binding site" evidence="1">
    <location>
        <position position="104"/>
    </location>
    <ligand>
        <name>[4Fe-4S] cluster</name>
        <dbReference type="ChEBI" id="CHEBI:49883"/>
        <label>4</label>
    </ligand>
</feature>
<feature type="binding site" evidence="1">
    <location>
        <position position="125"/>
    </location>
    <ligand>
        <name>[4Fe-4S] cluster</name>
        <dbReference type="ChEBI" id="CHEBI:49883"/>
        <label>4</label>
    </ligand>
</feature>
<feature type="binding site" evidence="1">
    <location>
        <position position="128"/>
    </location>
    <ligand>
        <name>[4Fe-4S] cluster</name>
        <dbReference type="ChEBI" id="CHEBI:49883"/>
        <label>4</label>
    </ligand>
</feature>
<feature type="binding site" evidence="1">
    <location>
        <position position="131"/>
    </location>
    <ligand>
        <name>[4Fe-4S] cluster</name>
        <dbReference type="ChEBI" id="CHEBI:49883"/>
        <label>4</label>
    </ligand>
</feature>
<feature type="binding site" evidence="1">
    <location>
        <position position="135"/>
    </location>
    <ligand>
        <name>[4Fe-4S] cluster</name>
        <dbReference type="ChEBI" id="CHEBI:49883"/>
        <label>3</label>
    </ligand>
</feature>
<feature type="binding site" evidence="1">
    <location>
        <position position="152"/>
    </location>
    <ligand>
        <name>[4Fe-4S] cluster</name>
        <dbReference type="ChEBI" id="CHEBI:49883"/>
        <label>2</label>
    </ligand>
</feature>
<feature type="binding site" evidence="1">
    <location>
        <position position="155"/>
    </location>
    <ligand>
        <name>[4Fe-4S] cluster</name>
        <dbReference type="ChEBI" id="CHEBI:49883"/>
        <label>2</label>
    </ligand>
</feature>
<feature type="binding site" evidence="1">
    <location>
        <position position="168"/>
    </location>
    <ligand>
        <name>[4Fe-4S] cluster</name>
        <dbReference type="ChEBI" id="CHEBI:49883"/>
        <label>2</label>
    </ligand>
</feature>
<feature type="binding site" evidence="1">
    <location>
        <position position="172"/>
    </location>
    <ligand>
        <name>[4Fe-4S] cluster</name>
        <dbReference type="ChEBI" id="CHEBI:49883"/>
        <label>1</label>
    </ligand>
</feature>
<keyword id="KW-0004">4Fe-4S</keyword>
<keyword id="KW-0249">Electron transport</keyword>
<keyword id="KW-0408">Iron</keyword>
<keyword id="KW-0411">Iron-sulfur</keyword>
<keyword id="KW-0479">Metal-binding</keyword>
<keyword id="KW-0560">Oxidoreductase</keyword>
<keyword id="KW-1185">Reference proteome</keyword>
<keyword id="KW-0677">Repeat</keyword>
<keyword id="KW-0732">Signal</keyword>
<keyword id="KW-0813">Transport</keyword>
<proteinExistence type="inferred from homology"/>
<comment type="function">
    <text evidence="1">Probably involved in the transfer of electrons from the quinone pool to the type-c cytochromes.</text>
</comment>
<comment type="PTM">
    <text>Predicted to be exported by the Tat system. The position of the signal peptide cleavage has not been experimentally proven.</text>
</comment>
<name>NRFC_ECO57</name>
<accession>P0AAK8</accession>
<accession>P32708</accession>